<organism>
    <name type="scientific">Saccharomyces cerevisiae (strain ATCC 204508 / S288c)</name>
    <name type="common">Baker's yeast</name>
    <dbReference type="NCBI Taxonomy" id="559292"/>
    <lineage>
        <taxon>Eukaryota</taxon>
        <taxon>Fungi</taxon>
        <taxon>Dikarya</taxon>
        <taxon>Ascomycota</taxon>
        <taxon>Saccharomycotina</taxon>
        <taxon>Saccharomycetes</taxon>
        <taxon>Saccharomycetales</taxon>
        <taxon>Saccharomycetaceae</taxon>
        <taxon>Saccharomyces</taxon>
    </lineage>
</organism>
<dbReference type="EMBL" id="U32274">
    <property type="protein sequence ID" value="AAB64833.1"/>
    <property type="molecule type" value="Genomic_DNA"/>
</dbReference>
<dbReference type="EMBL" id="BK006938">
    <property type="protein sequence ID" value="DAA12235.1"/>
    <property type="molecule type" value="Genomic_DNA"/>
</dbReference>
<dbReference type="PIR" id="S69675">
    <property type="entry name" value="S69675"/>
</dbReference>
<dbReference type="RefSeq" id="NP_010679.3">
    <property type="nucleotide sequence ID" value="NM_001180699.3"/>
</dbReference>
<dbReference type="SMR" id="Q04170"/>
<dbReference type="BioGRID" id="32453">
    <property type="interactions" value="102"/>
</dbReference>
<dbReference type="FunCoup" id="Q04170">
    <property type="interactions" value="101"/>
</dbReference>
<dbReference type="IntAct" id="Q04170">
    <property type="interactions" value="4"/>
</dbReference>
<dbReference type="STRING" id="4932.YDR391C"/>
<dbReference type="iPTMnet" id="Q04170"/>
<dbReference type="PaxDb" id="4932-YDR391C"/>
<dbReference type="PeptideAtlas" id="Q04170"/>
<dbReference type="EnsemblFungi" id="YDR391C_mRNA">
    <property type="protein sequence ID" value="YDR391C"/>
    <property type="gene ID" value="YDR391C"/>
</dbReference>
<dbReference type="GeneID" id="852000"/>
<dbReference type="KEGG" id="sce:YDR391C"/>
<dbReference type="AGR" id="SGD:S000002799"/>
<dbReference type="SGD" id="S000002799">
    <property type="gene designation" value="YDR391C"/>
</dbReference>
<dbReference type="VEuPathDB" id="FungiDB:YDR391C"/>
<dbReference type="eggNOG" id="ENOG502RYMB">
    <property type="taxonomic scope" value="Eukaryota"/>
</dbReference>
<dbReference type="GeneTree" id="ENSGT00940000176382"/>
<dbReference type="HOGENOM" id="CLU_069195_0_0_1"/>
<dbReference type="InParanoid" id="Q04170"/>
<dbReference type="OMA" id="YGVGEVN"/>
<dbReference type="OrthoDB" id="410198at2759"/>
<dbReference type="BioCyc" id="YEAST:G3O-29939-MONOMER"/>
<dbReference type="BioGRID-ORCS" id="852000">
    <property type="hits" value="0 hits in 10 CRISPR screens"/>
</dbReference>
<dbReference type="PRO" id="PR:Q04170"/>
<dbReference type="Proteomes" id="UP000002311">
    <property type="component" value="Chromosome IV"/>
</dbReference>
<dbReference type="RNAct" id="Q04170">
    <property type="molecule type" value="protein"/>
</dbReference>
<dbReference type="GO" id="GO:0005737">
    <property type="term" value="C:cytoplasm"/>
    <property type="evidence" value="ECO:0007005"/>
    <property type="project" value="SGD"/>
</dbReference>
<dbReference type="GO" id="GO:0005634">
    <property type="term" value="C:nucleus"/>
    <property type="evidence" value="ECO:0007005"/>
    <property type="project" value="SGD"/>
</dbReference>
<dbReference type="FunFam" id="3.40.630.30:FF:000185">
    <property type="entry name" value="YDR391C-like protein"/>
    <property type="match status" value="1"/>
</dbReference>
<dbReference type="Gene3D" id="3.40.630.30">
    <property type="match status" value="1"/>
</dbReference>
<dbReference type="InterPro" id="IPR052564">
    <property type="entry name" value="N-acetyltrans/Recomb-assoc"/>
</dbReference>
<dbReference type="PANTHER" id="PTHR43451:SF1">
    <property type="entry name" value="ACETYLTRANSFERASE"/>
    <property type="match status" value="1"/>
</dbReference>
<dbReference type="PANTHER" id="PTHR43451">
    <property type="entry name" value="ACETYLTRANSFERASE (GNAT) FAMILY PROTEIN"/>
    <property type="match status" value="1"/>
</dbReference>
<reference key="1">
    <citation type="journal article" date="1997" name="Nature">
        <title>The nucleotide sequence of Saccharomyces cerevisiae chromosome IV.</title>
        <authorList>
            <person name="Jacq C."/>
            <person name="Alt-Moerbe J."/>
            <person name="Andre B."/>
            <person name="Arnold W."/>
            <person name="Bahr A."/>
            <person name="Ballesta J.P.G."/>
            <person name="Bargues M."/>
            <person name="Baron L."/>
            <person name="Becker A."/>
            <person name="Biteau N."/>
            <person name="Bloecker H."/>
            <person name="Blugeon C."/>
            <person name="Boskovic J."/>
            <person name="Brandt P."/>
            <person name="Brueckner M."/>
            <person name="Buitrago M.J."/>
            <person name="Coster F."/>
            <person name="Delaveau T."/>
            <person name="del Rey F."/>
            <person name="Dujon B."/>
            <person name="Eide L.G."/>
            <person name="Garcia-Cantalejo J.M."/>
            <person name="Goffeau A."/>
            <person name="Gomez-Peris A."/>
            <person name="Granotier C."/>
            <person name="Hanemann V."/>
            <person name="Hankeln T."/>
            <person name="Hoheisel J.D."/>
            <person name="Jaeger W."/>
            <person name="Jimenez A."/>
            <person name="Jonniaux J.-L."/>
            <person name="Kraemer C."/>
            <person name="Kuester H."/>
            <person name="Laamanen P."/>
            <person name="Legros Y."/>
            <person name="Louis E.J."/>
            <person name="Moeller-Rieker S."/>
            <person name="Monnet A."/>
            <person name="Moro M."/>
            <person name="Mueller-Auer S."/>
            <person name="Nussbaumer B."/>
            <person name="Paricio N."/>
            <person name="Paulin L."/>
            <person name="Perea J."/>
            <person name="Perez-Alonso M."/>
            <person name="Perez-Ortin J.E."/>
            <person name="Pohl T.M."/>
            <person name="Prydz H."/>
            <person name="Purnelle B."/>
            <person name="Rasmussen S.W."/>
            <person name="Remacha M.A."/>
            <person name="Revuelta J.L."/>
            <person name="Rieger M."/>
            <person name="Salom D."/>
            <person name="Saluz H.P."/>
            <person name="Saiz J.E."/>
            <person name="Saren A.-M."/>
            <person name="Schaefer M."/>
            <person name="Scharfe M."/>
            <person name="Schmidt E.R."/>
            <person name="Schneider C."/>
            <person name="Scholler P."/>
            <person name="Schwarz S."/>
            <person name="Soler-Mira A."/>
            <person name="Urrestarazu L.A."/>
            <person name="Verhasselt P."/>
            <person name="Vissers S."/>
            <person name="Voet M."/>
            <person name="Volckaert G."/>
            <person name="Wagner G."/>
            <person name="Wambutt R."/>
            <person name="Wedler E."/>
            <person name="Wedler H."/>
            <person name="Woelfl S."/>
            <person name="Harris D.E."/>
            <person name="Bowman S."/>
            <person name="Brown D."/>
            <person name="Churcher C.M."/>
            <person name="Connor R."/>
            <person name="Dedman K."/>
            <person name="Gentles S."/>
            <person name="Hamlin N."/>
            <person name="Hunt S."/>
            <person name="Jones L."/>
            <person name="McDonald S."/>
            <person name="Murphy L.D."/>
            <person name="Niblett D."/>
            <person name="Odell C."/>
            <person name="Oliver K."/>
            <person name="Rajandream M.A."/>
            <person name="Richards C."/>
            <person name="Shore L."/>
            <person name="Walsh S.V."/>
            <person name="Barrell B.G."/>
            <person name="Dietrich F.S."/>
            <person name="Mulligan J.T."/>
            <person name="Allen E."/>
            <person name="Araujo R."/>
            <person name="Aviles E."/>
            <person name="Berno A."/>
            <person name="Carpenter J."/>
            <person name="Chen E."/>
            <person name="Cherry J.M."/>
            <person name="Chung E."/>
            <person name="Duncan M."/>
            <person name="Hunicke-Smith S."/>
            <person name="Hyman R.W."/>
            <person name="Komp C."/>
            <person name="Lashkari D."/>
            <person name="Lew H."/>
            <person name="Lin D."/>
            <person name="Mosedale D."/>
            <person name="Nakahara K."/>
            <person name="Namath A."/>
            <person name="Oefner P."/>
            <person name="Oh C."/>
            <person name="Petel F.X."/>
            <person name="Roberts D."/>
            <person name="Schramm S."/>
            <person name="Schroeder M."/>
            <person name="Shogren T."/>
            <person name="Shroff N."/>
            <person name="Winant A."/>
            <person name="Yelton M.A."/>
            <person name="Botstein D."/>
            <person name="Davis R.W."/>
            <person name="Johnston M."/>
            <person name="Andrews S."/>
            <person name="Brinkman R."/>
            <person name="Cooper J."/>
            <person name="Ding H."/>
            <person name="Du Z."/>
            <person name="Favello A."/>
            <person name="Fulton L."/>
            <person name="Gattung S."/>
            <person name="Greco T."/>
            <person name="Hallsworth K."/>
            <person name="Hawkins J."/>
            <person name="Hillier L.W."/>
            <person name="Jier M."/>
            <person name="Johnson D."/>
            <person name="Johnston L."/>
            <person name="Kirsten J."/>
            <person name="Kucaba T."/>
            <person name="Langston Y."/>
            <person name="Latreille P."/>
            <person name="Le T."/>
            <person name="Mardis E."/>
            <person name="Menezes S."/>
            <person name="Miller N."/>
            <person name="Nhan M."/>
            <person name="Pauley A."/>
            <person name="Peluso D."/>
            <person name="Rifkin L."/>
            <person name="Riles L."/>
            <person name="Taich A."/>
            <person name="Trevaskis E."/>
            <person name="Vignati D."/>
            <person name="Wilcox L."/>
            <person name="Wohldman P."/>
            <person name="Vaudin M."/>
            <person name="Wilson R."/>
            <person name="Waterston R."/>
            <person name="Albermann K."/>
            <person name="Hani J."/>
            <person name="Heumann K."/>
            <person name="Kleine K."/>
            <person name="Mewes H.-W."/>
            <person name="Zollner A."/>
            <person name="Zaccaria P."/>
        </authorList>
    </citation>
    <scope>NUCLEOTIDE SEQUENCE [LARGE SCALE GENOMIC DNA]</scope>
    <source>
        <strain>ATCC 204508 / S288c</strain>
    </source>
</reference>
<reference key="2">
    <citation type="journal article" date="2014" name="G3 (Bethesda)">
        <title>The reference genome sequence of Saccharomyces cerevisiae: Then and now.</title>
        <authorList>
            <person name="Engel S.R."/>
            <person name="Dietrich F.S."/>
            <person name="Fisk D.G."/>
            <person name="Binkley G."/>
            <person name="Balakrishnan R."/>
            <person name="Costanzo M.C."/>
            <person name="Dwight S.S."/>
            <person name="Hitz B.C."/>
            <person name="Karra K."/>
            <person name="Nash R.S."/>
            <person name="Weng S."/>
            <person name="Wong E.D."/>
            <person name="Lloyd P."/>
            <person name="Skrzypek M.S."/>
            <person name="Miyasato S.R."/>
            <person name="Simison M."/>
            <person name="Cherry J.M."/>
        </authorList>
    </citation>
    <scope>GENOME REANNOTATION</scope>
    <source>
        <strain>ATCC 204508 / S288c</strain>
    </source>
</reference>
<reference key="3">
    <citation type="journal article" date="2003" name="Nature">
        <title>Global analysis of protein localization in budding yeast.</title>
        <authorList>
            <person name="Huh W.-K."/>
            <person name="Falvo J.V."/>
            <person name="Gerke L.C."/>
            <person name="Carroll A.S."/>
            <person name="Howson R.W."/>
            <person name="Weissman J.S."/>
            <person name="O'Shea E.K."/>
        </authorList>
    </citation>
    <scope>SUBCELLULAR LOCATION [LARGE SCALE ANALYSIS]</scope>
</reference>
<reference key="4">
    <citation type="journal article" date="2003" name="Nature">
        <title>Global analysis of protein expression in yeast.</title>
        <authorList>
            <person name="Ghaemmaghami S."/>
            <person name="Huh W.-K."/>
            <person name="Bower K."/>
            <person name="Howson R.W."/>
            <person name="Belle A."/>
            <person name="Dephoure N."/>
            <person name="O'Shea E.K."/>
            <person name="Weissman J.S."/>
        </authorList>
    </citation>
    <scope>LEVEL OF PROTEIN EXPRESSION [LARGE SCALE ANALYSIS]</scope>
</reference>
<protein>
    <recommendedName>
        <fullName>Uncharacterized protein YDR391C</fullName>
    </recommendedName>
</protein>
<comment type="subcellular location">
    <subcellularLocation>
        <location evidence="1">Cytoplasm</location>
    </subcellularLocation>
    <subcellularLocation>
        <location evidence="1">Nucleus</location>
    </subcellularLocation>
</comment>
<comment type="miscellaneous">
    <text evidence="2">Present with 6020 molecules/cell in log phase SD medium.</text>
</comment>
<evidence type="ECO:0000269" key="1">
    <source>
    </source>
</evidence>
<evidence type="ECO:0000269" key="2">
    <source>
    </source>
</evidence>
<gene>
    <name type="ordered locus">YDR391C</name>
</gene>
<name>YD391_YEAST</name>
<feature type="chain" id="PRO_0000253851" description="Uncharacterized protein YDR391C">
    <location>
        <begin position="1"/>
        <end position="232"/>
    </location>
</feature>
<accession>Q04170</accession>
<accession>D6VT25</accession>
<proteinExistence type="evidence at protein level"/>
<sequence>MSFENKLPTPLENNDAKGHMVCTLNKTTDARRAAETLSIAFSNSPAFHFICKKILNIPLAEKVPTRTITTDIISPFLDSPYGEISEVNTFDAVAVWSLPPHVPKARSNDAKFNKDFIDDLNARVKQVIPNGINYYYLFCIGKNLNEKGIRGSVRTIFEEYKRRADEENCAIVLEAIAEHAKSVYEYFGFRNYMTFKYGECEVDSNGNCDPNGEGFTAYLMIYHKDGNKVLKE</sequence>
<keyword id="KW-0963">Cytoplasm</keyword>
<keyword id="KW-0539">Nucleus</keyword>
<keyword id="KW-1185">Reference proteome</keyword>